<name>RL36_GRABC</name>
<organism>
    <name type="scientific">Granulibacter bethesdensis (strain ATCC BAA-1260 / CGDNIH1)</name>
    <dbReference type="NCBI Taxonomy" id="391165"/>
    <lineage>
        <taxon>Bacteria</taxon>
        <taxon>Pseudomonadati</taxon>
        <taxon>Pseudomonadota</taxon>
        <taxon>Alphaproteobacteria</taxon>
        <taxon>Acetobacterales</taxon>
        <taxon>Acetobacteraceae</taxon>
        <taxon>Granulibacter</taxon>
    </lineage>
</organism>
<comment type="similarity">
    <text evidence="1">Belongs to the bacterial ribosomal protein bL36 family.</text>
</comment>
<comment type="sequence caution" evidence="2">
    <conflict type="erroneous initiation">
        <sequence resource="EMBL-CDS" id="ABI62130"/>
    </conflict>
</comment>
<dbReference type="EMBL" id="CP000394">
    <property type="protein sequence ID" value="ABI62130.1"/>
    <property type="status" value="ALT_INIT"/>
    <property type="molecule type" value="Genomic_DNA"/>
</dbReference>
<dbReference type="RefSeq" id="WP_025286647.1">
    <property type="nucleotide sequence ID" value="NC_008343.2"/>
</dbReference>
<dbReference type="SMR" id="Q0BSS2"/>
<dbReference type="STRING" id="391165.GbCGDNIH1_1232"/>
<dbReference type="GeneID" id="69745471"/>
<dbReference type="KEGG" id="gbe:GbCGDNIH1_1232"/>
<dbReference type="eggNOG" id="COG0257">
    <property type="taxonomic scope" value="Bacteria"/>
</dbReference>
<dbReference type="HOGENOM" id="CLU_2617027_0_0_5"/>
<dbReference type="OrthoDB" id="9801558at2"/>
<dbReference type="Proteomes" id="UP000001963">
    <property type="component" value="Chromosome"/>
</dbReference>
<dbReference type="GO" id="GO:1990904">
    <property type="term" value="C:ribonucleoprotein complex"/>
    <property type="evidence" value="ECO:0007669"/>
    <property type="project" value="UniProtKB-KW"/>
</dbReference>
<dbReference type="GO" id="GO:0005840">
    <property type="term" value="C:ribosome"/>
    <property type="evidence" value="ECO:0007669"/>
    <property type="project" value="UniProtKB-KW"/>
</dbReference>
<dbReference type="GO" id="GO:0003735">
    <property type="term" value="F:structural constituent of ribosome"/>
    <property type="evidence" value="ECO:0007669"/>
    <property type="project" value="InterPro"/>
</dbReference>
<dbReference type="GO" id="GO:0006412">
    <property type="term" value="P:translation"/>
    <property type="evidence" value="ECO:0007669"/>
    <property type="project" value="UniProtKB-UniRule"/>
</dbReference>
<dbReference type="HAMAP" id="MF_00251">
    <property type="entry name" value="Ribosomal_bL36"/>
    <property type="match status" value="1"/>
</dbReference>
<dbReference type="InterPro" id="IPR000473">
    <property type="entry name" value="Ribosomal_bL36"/>
</dbReference>
<dbReference type="InterPro" id="IPR035977">
    <property type="entry name" value="Ribosomal_bL36_sp"/>
</dbReference>
<dbReference type="InterPro" id="IPR047621">
    <property type="entry name" value="Ribosomal_L36_bact"/>
</dbReference>
<dbReference type="NCBIfam" id="NF002021">
    <property type="entry name" value="PRK00831.1"/>
    <property type="match status" value="1"/>
</dbReference>
<dbReference type="NCBIfam" id="TIGR01022">
    <property type="entry name" value="rpmJ_bact"/>
    <property type="match status" value="1"/>
</dbReference>
<dbReference type="PANTHER" id="PTHR47781">
    <property type="entry name" value="50S RIBOSOMAL PROTEIN L36 2"/>
    <property type="match status" value="1"/>
</dbReference>
<dbReference type="PANTHER" id="PTHR47781:SF1">
    <property type="entry name" value="LARGE RIBOSOMAL SUBUNIT PROTEIN BL36B"/>
    <property type="match status" value="1"/>
</dbReference>
<dbReference type="Pfam" id="PF00444">
    <property type="entry name" value="Ribosomal_L36"/>
    <property type="match status" value="1"/>
</dbReference>
<dbReference type="SUPFAM" id="SSF57840">
    <property type="entry name" value="Ribosomal protein L36"/>
    <property type="match status" value="1"/>
</dbReference>
<feature type="chain" id="PRO_0000344682" description="Large ribosomal subunit protein bL36">
    <location>
        <begin position="1"/>
        <end position="41"/>
    </location>
</feature>
<proteinExistence type="inferred from homology"/>
<evidence type="ECO:0000255" key="1">
    <source>
        <dbReference type="HAMAP-Rule" id="MF_00251"/>
    </source>
</evidence>
<evidence type="ECO:0000305" key="2"/>
<reference key="1">
    <citation type="journal article" date="2007" name="J. Bacteriol.">
        <title>Genome sequence analysis of the emerging human pathogenic acetic acid bacterium Granulibacter bethesdensis.</title>
        <authorList>
            <person name="Greenberg D.E."/>
            <person name="Porcella S.F."/>
            <person name="Zelazny A.M."/>
            <person name="Virtaneva K."/>
            <person name="Sturdevant D.E."/>
            <person name="Kupko J.J. III"/>
            <person name="Barbian K.D."/>
            <person name="Babar A."/>
            <person name="Dorward D.W."/>
            <person name="Holland S.M."/>
        </authorList>
    </citation>
    <scope>NUCLEOTIDE SEQUENCE [LARGE SCALE GENOMIC DNA]</scope>
    <source>
        <strain>ATCC BAA-1260 / CGDNIH1</strain>
    </source>
</reference>
<keyword id="KW-1185">Reference proteome</keyword>
<keyword id="KW-0687">Ribonucleoprotein</keyword>
<keyword id="KW-0689">Ribosomal protein</keyword>
<sequence length="41" mass="4893">MKIRNSLKSAKVRDKNCRVVRRHGRVYVINKKNPRMKARQG</sequence>
<protein>
    <recommendedName>
        <fullName evidence="1">Large ribosomal subunit protein bL36</fullName>
    </recommendedName>
    <alternativeName>
        <fullName evidence="2">50S ribosomal protein L36</fullName>
    </alternativeName>
</protein>
<accession>Q0BSS2</accession>
<gene>
    <name evidence="1" type="primary">rpmJ</name>
    <name type="ordered locus">GbCGDNIH1_1232</name>
</gene>